<name>ABRB_ABRPR</name>
<protein>
    <recommendedName>
        <fullName>Abrin-b</fullName>
    </recommendedName>
    <component>
        <recommendedName>
            <fullName>Abrin-b A chain</fullName>
            <ecNumber>3.2.2.22</ecNumber>
        </recommendedName>
        <alternativeName>
            <fullName>rRNA N-glycosidase</fullName>
        </alternativeName>
    </component>
    <component>
        <recommendedName>
            <fullName>Linker peptide</fullName>
        </recommendedName>
    </component>
    <component>
        <recommendedName>
            <fullName>Abrin-b B chain</fullName>
        </recommendedName>
    </component>
</protein>
<accession>Q06077</accession>
<accession>P81374</accession>
<organism>
    <name type="scientific">Abrus precatorius</name>
    <name type="common">Indian licorice</name>
    <name type="synonym">Glycine abrus</name>
    <dbReference type="NCBI Taxonomy" id="3816"/>
    <lineage>
        <taxon>Eukaryota</taxon>
        <taxon>Viridiplantae</taxon>
        <taxon>Streptophyta</taxon>
        <taxon>Embryophyta</taxon>
        <taxon>Tracheophyta</taxon>
        <taxon>Spermatophyta</taxon>
        <taxon>Magnoliopsida</taxon>
        <taxon>eudicotyledons</taxon>
        <taxon>Gunneridae</taxon>
        <taxon>Pentapetalae</taxon>
        <taxon>rosids</taxon>
        <taxon>fabids</taxon>
        <taxon>Fabales</taxon>
        <taxon>Fabaceae</taxon>
        <taxon>Papilionoideae</taxon>
        <taxon>50 kb inversion clade</taxon>
        <taxon>NPAAA clade</taxon>
        <taxon>indigoferoid/millettioid clade</taxon>
        <taxon>Abreae</taxon>
        <taxon>Abrus</taxon>
    </lineage>
</organism>
<reference key="1">
    <citation type="journal article" date="1993" name="J. Mol. Biol.">
        <title>Primary structure of three distinct isoabrins determined by cDNA sequencing. Conservation and significance.</title>
        <authorList>
            <person name="Hung C.-H."/>
            <person name="Lee M.-C."/>
            <person name="Lee T.-C."/>
            <person name="Lin J.-Y."/>
        </authorList>
    </citation>
    <scope>NUCLEOTIDE SEQUENCE [MRNA]</scope>
</reference>
<reference key="2">
    <citation type="journal article" date="1993" name="Biosci. Biotechnol. Biochem.">
        <title>The complete amino acid sequences of the B-chains of abrin-a and abrin-b, toxic proteins from the seeds of Abrus precatorius.</title>
        <authorList>
            <person name="Kimura M."/>
            <person name="Sumizawa T."/>
            <person name="Funatsu G."/>
        </authorList>
    </citation>
    <scope>PROTEIN SEQUENCE OF 260-527</scope>
    <source>
        <tissue>Seed</tissue>
    </source>
</reference>
<keyword id="KW-0903">Direct protein sequencing</keyword>
<keyword id="KW-1015">Disulfide bond</keyword>
<keyword id="KW-0325">Glycoprotein</keyword>
<keyword id="KW-0378">Hydrolase</keyword>
<keyword id="KW-0430">Lectin</keyword>
<keyword id="KW-0611">Plant defense</keyword>
<keyword id="KW-0652">Protein synthesis inhibitor</keyword>
<keyword id="KW-0873">Pyrrolidone carboxylic acid</keyword>
<keyword id="KW-1185">Reference proteome</keyword>
<keyword id="KW-0677">Repeat</keyword>
<keyword id="KW-0800">Toxin</keyword>
<feature type="chain" id="PRO_0000030732" description="Abrin-b A chain">
    <location>
        <begin position="1"/>
        <end position="250"/>
    </location>
</feature>
<feature type="peptide" id="PRO_0000030733" description="Linker peptide">
    <location>
        <begin position="251"/>
        <end position="260"/>
    </location>
</feature>
<feature type="chain" id="PRO_0000030734" description="Abrin-b B chain">
    <location>
        <begin position="261"/>
        <end position="527"/>
    </location>
</feature>
<feature type="domain" description="Ricin B-type lectin 1" evidence="3">
    <location>
        <begin position="272"/>
        <end position="399"/>
    </location>
</feature>
<feature type="repeat" description="1-alpha">
    <location>
        <begin position="282"/>
        <end position="324"/>
    </location>
</feature>
<feature type="repeat" description="1-beta">
    <location>
        <begin position="325"/>
        <end position="365"/>
    </location>
</feature>
<feature type="repeat" description="1-gamma">
    <location>
        <begin position="368"/>
        <end position="400"/>
    </location>
</feature>
<feature type="domain" description="Ricin B-type lectin 2" evidence="3">
    <location>
        <begin position="402"/>
        <end position="526"/>
    </location>
</feature>
<feature type="repeat" description="2-alpha">
    <location>
        <begin position="413"/>
        <end position="448"/>
    </location>
</feature>
<feature type="repeat" description="2-beta">
    <location>
        <begin position="452"/>
        <end position="491"/>
    </location>
</feature>
<feature type="repeat" description="2-gamma">
    <location>
        <begin position="494"/>
        <end position="527"/>
    </location>
</feature>
<feature type="active site" evidence="1">
    <location>
        <position position="163"/>
    </location>
</feature>
<feature type="modified residue" description="Pyrrolidone carboxylic acid" evidence="1">
    <location>
        <position position="1"/>
    </location>
</feature>
<feature type="glycosylation site" description="N-linked (GlcNAc...) asparagine" evidence="2">
    <location>
        <position position="110"/>
    </location>
</feature>
<feature type="glycosylation site" description="N-linked (GlcNAc...) asparagine" evidence="2">
    <location>
        <position position="360"/>
    </location>
</feature>
<feature type="glycosylation site" description="N-linked (GlcNAc...) asparagine" evidence="2">
    <location>
        <position position="400"/>
    </location>
</feature>
<feature type="disulfide bond" description="Interchain (between A and B chains)" evidence="3">
    <location>
        <begin position="246"/>
        <end position="268"/>
    </location>
</feature>
<feature type="disulfide bond" evidence="3">
    <location>
        <begin position="285"/>
        <end position="304"/>
    </location>
</feature>
<feature type="disulfide bond" evidence="3">
    <location>
        <begin position="328"/>
        <end position="345"/>
    </location>
</feature>
<feature type="disulfide bond" evidence="3">
    <location>
        <begin position="416"/>
        <end position="429"/>
    </location>
</feature>
<feature type="disulfide bond" evidence="3">
    <location>
        <begin position="455"/>
        <end position="472"/>
    </location>
</feature>
<feature type="sequence conflict" description="In Ref. 2; AA sequence." evidence="4" ref="2">
    <original>N</original>
    <variation>D</variation>
    <location>
        <position position="282"/>
    </location>
</feature>
<feature type="sequence conflict" description="In Ref. 2; AA sequence." evidence="4" ref="2">
    <original>D</original>
    <variation>N</variation>
    <location>
        <position position="291"/>
    </location>
</feature>
<feature type="sequence conflict" description="In Ref. 2; AA sequence." evidence="4" ref="2">
    <original>AE</original>
    <variation>PQ</variation>
    <location>
        <begin position="350"/>
        <end position="351"/>
    </location>
</feature>
<feature type="sequence conflict" description="In Ref. 2; AA sequence." evidence="4" ref="2">
    <original>S</original>
    <variation>N</variation>
    <location>
        <position position="378"/>
    </location>
</feature>
<feature type="sequence conflict" description="In Ref. 2; AA sequence." evidence="4" ref="2">
    <original>L</original>
    <variation>M</variation>
    <location>
        <position position="426"/>
    </location>
</feature>
<feature type="sequence conflict" description="In Ref. 2; AA sequence." evidence="4" ref="2">
    <original>Y</original>
    <variation>D</variation>
    <location>
        <position position="428"/>
    </location>
</feature>
<feature type="sequence conflict" description="In Ref. 2; AA sequence." evidence="4" ref="2">
    <original>N</original>
    <variation>S</variation>
    <location>
        <position position="431"/>
    </location>
</feature>
<feature type="sequence conflict" description="In Ref. 2; AA sequence." evidence="4" ref="2">
    <original>R</original>
    <variation>K</variation>
    <location>
        <position position="484"/>
    </location>
</feature>
<feature type="sequence conflict" description="In Ref. 2; AA sequence." evidence="4" ref="2">
    <original>N</original>
    <variation>S</variation>
    <location>
        <position position="491"/>
    </location>
</feature>
<feature type="sequence conflict" description="In Ref. 2; AA sequence." evidence="4" ref="2">
    <original>H</original>
    <variation>Y</variation>
    <location>
        <position position="493"/>
    </location>
</feature>
<feature type="sequence conflict" description="In Ref. 2; AA sequence." evidence="4" ref="2">
    <original>R</original>
    <variation>G</variation>
    <location>
        <position position="502"/>
    </location>
</feature>
<feature type="sequence conflict" description="In Ref. 2; AA sequence." evidence="4" ref="2">
    <original>E</original>
    <variation>Q</variation>
    <location>
        <position position="509"/>
    </location>
</feature>
<feature type="sequence conflict" description="In Ref. 2; AA sequence." evidence="4" ref="2">
    <original>H</original>
    <variation>W</variation>
    <location>
        <position position="513"/>
    </location>
</feature>
<feature type="sequence conflict" description="In Ref. 2; AA sequence." evidence="4" ref="2">
    <original>H</original>
    <variation>T</variation>
    <location>
        <position position="516"/>
    </location>
</feature>
<comment type="function">
    <text>The A chain is responsible for inhibiting protein synthesis through the catalytic inactivation of 60S ribosomal subunits by removing adenine from position 4,324 of 28S rRNA. Abrin-a is more toxic than ricin.</text>
</comment>
<comment type="function">
    <text>The B chain is a galactose-specific lectin that facilitates the binding of abrin to the cell membrane that precedes endocytosis.</text>
</comment>
<comment type="catalytic activity">
    <reaction>
        <text>Endohydrolysis of the N-glycosidic bond at one specific adenosine on the 28S rRNA.</text>
        <dbReference type="EC" id="3.2.2.22"/>
    </reaction>
</comment>
<comment type="subunit">
    <text>Disulfide-linked dimer of A and B chains.</text>
</comment>
<comment type="domain">
    <text>The B chain is composed of two domains, each domain consists of 3 homologous subdomains (alpha, beta, gamma).</text>
</comment>
<comment type="similarity">
    <text evidence="4">In the N-terminal section; belongs to the ribosome-inactivating protein family. Type 2 RIP subfamily.</text>
</comment>
<sequence>QDQVIKFTTEGATSQSYKQFIEALRQRLTGGLIHGIPVLPDPTTLQERNRYISVELSNSDTESIEAGIDVSNAYVVAYRAGNRSYFLRDAPTSASRYLFTGTQQYSLRFNGSYIDLERLARQTRQQIPLGLQALRHAISFLQSGTDDQEIARTLIVIIQMASEAARYRFISYRVGVSIRTNTAFQPDAAMISLENNWDNLSGGVQQSVQDTFPNAVTLRSVNNQPVIVDSLTHQSVAVLALMLFVCNPPNANQSPLLIRSIVEKSKICSSRYEPTVRIGGRNGMCVDVYDDGYHNGNRIIAWKCKDRLEENQLWTLKSDKTIRSNGKCLTTEGYAPGNYVMIYDCTSAVAEATYWEIWDNGTIINPKSALVLSAESSSMGGTLTVQTNEYLMRQGWRTGNNTSPFVTSISGYSDLCMQAQGSNVWLAYCDNNKKEQQWALYTDGSIRSVQNTNNCLTSKDHKQGSPIVLMACSNGWASQRWLFRNDGSIYNLHDDMVMDVKRSDPSLKEIILHPYHGKPNQIWLTLF</sequence>
<dbReference type="EC" id="3.2.2.22"/>
<dbReference type="EMBL" id="M98345">
    <property type="protein sequence ID" value="AAA32625.1"/>
    <property type="molecule type" value="mRNA"/>
</dbReference>
<dbReference type="PIR" id="S32430">
    <property type="entry name" value="S32430"/>
</dbReference>
<dbReference type="SMR" id="Q06077"/>
<dbReference type="Proteomes" id="UP000694853">
    <property type="component" value="Unplaced"/>
</dbReference>
<dbReference type="GO" id="GO:0030246">
    <property type="term" value="F:carbohydrate binding"/>
    <property type="evidence" value="ECO:0007669"/>
    <property type="project" value="UniProtKB-KW"/>
</dbReference>
<dbReference type="GO" id="GO:0030598">
    <property type="term" value="F:rRNA N-glycosylase activity"/>
    <property type="evidence" value="ECO:0007669"/>
    <property type="project" value="UniProtKB-EC"/>
</dbReference>
<dbReference type="GO" id="GO:0090729">
    <property type="term" value="F:toxin activity"/>
    <property type="evidence" value="ECO:0007669"/>
    <property type="project" value="UniProtKB-KW"/>
</dbReference>
<dbReference type="GO" id="GO:0006952">
    <property type="term" value="P:defense response"/>
    <property type="evidence" value="ECO:0007669"/>
    <property type="project" value="UniProtKB-KW"/>
</dbReference>
<dbReference type="GO" id="GO:0017148">
    <property type="term" value="P:negative regulation of translation"/>
    <property type="evidence" value="ECO:0007669"/>
    <property type="project" value="UniProtKB-KW"/>
</dbReference>
<dbReference type="CDD" id="cd23484">
    <property type="entry name" value="beta-trefoil_Ricin_abrin-like_rpt1"/>
    <property type="match status" value="1"/>
</dbReference>
<dbReference type="CDD" id="cd23491">
    <property type="entry name" value="beta-trefoil_Ricin_abrin-like_rpt2"/>
    <property type="match status" value="1"/>
</dbReference>
<dbReference type="FunFam" id="2.80.10.50:FF:000076">
    <property type="entry name" value="Beta-galactoside-specific lectin 1"/>
    <property type="match status" value="1"/>
</dbReference>
<dbReference type="FunFam" id="2.80.10.50:FF:000079">
    <property type="entry name" value="Ricin"/>
    <property type="match status" value="1"/>
</dbReference>
<dbReference type="FunFam" id="3.40.420.10:FF:000001">
    <property type="entry name" value="Ricin"/>
    <property type="match status" value="1"/>
</dbReference>
<dbReference type="Gene3D" id="2.80.10.50">
    <property type="match status" value="2"/>
</dbReference>
<dbReference type="Gene3D" id="3.40.420.10">
    <property type="entry name" value="Ricin (A subunit), domain 1"/>
    <property type="match status" value="1"/>
</dbReference>
<dbReference type="Gene3D" id="4.10.470.10">
    <property type="entry name" value="Ricin (A Subunit), domain 2"/>
    <property type="match status" value="1"/>
</dbReference>
<dbReference type="InterPro" id="IPR036041">
    <property type="entry name" value="Ribosome-inact_prot_sf"/>
</dbReference>
<dbReference type="InterPro" id="IPR017989">
    <property type="entry name" value="Ribosome_inactivat_1/2"/>
</dbReference>
<dbReference type="InterPro" id="IPR001574">
    <property type="entry name" value="Ribosome_inactivat_prot"/>
</dbReference>
<dbReference type="InterPro" id="IPR017988">
    <property type="entry name" value="Ribosome_inactivat_prot_CS"/>
</dbReference>
<dbReference type="InterPro" id="IPR016138">
    <property type="entry name" value="Ribosome_inactivat_prot_sub1"/>
</dbReference>
<dbReference type="InterPro" id="IPR016139">
    <property type="entry name" value="Ribosome_inactivat_prot_sub2"/>
</dbReference>
<dbReference type="InterPro" id="IPR035992">
    <property type="entry name" value="Ricin_B-like_lectins"/>
</dbReference>
<dbReference type="InterPro" id="IPR000772">
    <property type="entry name" value="Ricin_B_lectin"/>
</dbReference>
<dbReference type="PANTHER" id="PTHR33453">
    <property type="match status" value="1"/>
</dbReference>
<dbReference type="PANTHER" id="PTHR33453:SF34">
    <property type="entry name" value="RIBOSOME-INACTIVATING PROTEIN"/>
    <property type="match status" value="1"/>
</dbReference>
<dbReference type="Pfam" id="PF00652">
    <property type="entry name" value="Ricin_B_lectin"/>
    <property type="match status" value="2"/>
</dbReference>
<dbReference type="Pfam" id="PF00161">
    <property type="entry name" value="RIP"/>
    <property type="match status" value="1"/>
</dbReference>
<dbReference type="PRINTS" id="PR00396">
    <property type="entry name" value="SHIGARICIN"/>
</dbReference>
<dbReference type="SMART" id="SM00458">
    <property type="entry name" value="RICIN"/>
    <property type="match status" value="2"/>
</dbReference>
<dbReference type="SUPFAM" id="SSF56371">
    <property type="entry name" value="Ribosome inactivating proteins (RIP)"/>
    <property type="match status" value="1"/>
</dbReference>
<dbReference type="SUPFAM" id="SSF50370">
    <property type="entry name" value="Ricin B-like lectins"/>
    <property type="match status" value="2"/>
</dbReference>
<dbReference type="PROSITE" id="PS50231">
    <property type="entry name" value="RICIN_B_LECTIN"/>
    <property type="match status" value="2"/>
</dbReference>
<dbReference type="PROSITE" id="PS00275">
    <property type="entry name" value="SHIGA_RICIN"/>
    <property type="match status" value="1"/>
</dbReference>
<evidence type="ECO:0000250" key="1"/>
<evidence type="ECO:0000255" key="2"/>
<evidence type="ECO:0000255" key="3">
    <source>
        <dbReference type="PROSITE-ProRule" id="PRU00174"/>
    </source>
</evidence>
<evidence type="ECO:0000305" key="4"/>
<proteinExistence type="evidence at protein level"/>